<organism>
    <name type="scientific">Bacillus cereus (strain AH820)</name>
    <dbReference type="NCBI Taxonomy" id="405535"/>
    <lineage>
        <taxon>Bacteria</taxon>
        <taxon>Bacillati</taxon>
        <taxon>Bacillota</taxon>
        <taxon>Bacilli</taxon>
        <taxon>Bacillales</taxon>
        <taxon>Bacillaceae</taxon>
        <taxon>Bacillus</taxon>
        <taxon>Bacillus cereus group</taxon>
    </lineage>
</organism>
<dbReference type="EC" id="5.3.1.1" evidence="1"/>
<dbReference type="EMBL" id="CP001283">
    <property type="protein sequence ID" value="ACK92625.1"/>
    <property type="molecule type" value="Genomic_DNA"/>
</dbReference>
<dbReference type="RefSeq" id="WP_001231037.1">
    <property type="nucleotide sequence ID" value="NC_011773.1"/>
</dbReference>
<dbReference type="SMR" id="B7JFG5"/>
<dbReference type="GeneID" id="75088295"/>
<dbReference type="KEGG" id="bcu:BCAH820_5222"/>
<dbReference type="HOGENOM" id="CLU_024251_2_3_9"/>
<dbReference type="UniPathway" id="UPA00109">
    <property type="reaction ID" value="UER00189"/>
</dbReference>
<dbReference type="UniPathway" id="UPA00138"/>
<dbReference type="Proteomes" id="UP000001363">
    <property type="component" value="Chromosome"/>
</dbReference>
<dbReference type="GO" id="GO:0005829">
    <property type="term" value="C:cytosol"/>
    <property type="evidence" value="ECO:0007669"/>
    <property type="project" value="TreeGrafter"/>
</dbReference>
<dbReference type="GO" id="GO:0004807">
    <property type="term" value="F:triose-phosphate isomerase activity"/>
    <property type="evidence" value="ECO:0007669"/>
    <property type="project" value="UniProtKB-UniRule"/>
</dbReference>
<dbReference type="GO" id="GO:0006094">
    <property type="term" value="P:gluconeogenesis"/>
    <property type="evidence" value="ECO:0007669"/>
    <property type="project" value="UniProtKB-UniRule"/>
</dbReference>
<dbReference type="GO" id="GO:0046166">
    <property type="term" value="P:glyceraldehyde-3-phosphate biosynthetic process"/>
    <property type="evidence" value="ECO:0007669"/>
    <property type="project" value="TreeGrafter"/>
</dbReference>
<dbReference type="GO" id="GO:0019563">
    <property type="term" value="P:glycerol catabolic process"/>
    <property type="evidence" value="ECO:0007669"/>
    <property type="project" value="TreeGrafter"/>
</dbReference>
<dbReference type="GO" id="GO:0006096">
    <property type="term" value="P:glycolytic process"/>
    <property type="evidence" value="ECO:0007669"/>
    <property type="project" value="UniProtKB-UniRule"/>
</dbReference>
<dbReference type="CDD" id="cd00311">
    <property type="entry name" value="TIM"/>
    <property type="match status" value="1"/>
</dbReference>
<dbReference type="FunFam" id="3.20.20.70:FF:000016">
    <property type="entry name" value="Triosephosphate isomerase"/>
    <property type="match status" value="1"/>
</dbReference>
<dbReference type="Gene3D" id="3.20.20.70">
    <property type="entry name" value="Aldolase class I"/>
    <property type="match status" value="1"/>
</dbReference>
<dbReference type="HAMAP" id="MF_00147_B">
    <property type="entry name" value="TIM_B"/>
    <property type="match status" value="1"/>
</dbReference>
<dbReference type="InterPro" id="IPR013785">
    <property type="entry name" value="Aldolase_TIM"/>
</dbReference>
<dbReference type="InterPro" id="IPR035990">
    <property type="entry name" value="TIM_sf"/>
</dbReference>
<dbReference type="InterPro" id="IPR022896">
    <property type="entry name" value="TrioseP_Isoase_bac/euk"/>
</dbReference>
<dbReference type="InterPro" id="IPR000652">
    <property type="entry name" value="Triosephosphate_isomerase"/>
</dbReference>
<dbReference type="InterPro" id="IPR020861">
    <property type="entry name" value="Triosephosphate_isomerase_AS"/>
</dbReference>
<dbReference type="NCBIfam" id="TIGR00419">
    <property type="entry name" value="tim"/>
    <property type="match status" value="1"/>
</dbReference>
<dbReference type="PANTHER" id="PTHR21139">
    <property type="entry name" value="TRIOSEPHOSPHATE ISOMERASE"/>
    <property type="match status" value="1"/>
</dbReference>
<dbReference type="PANTHER" id="PTHR21139:SF42">
    <property type="entry name" value="TRIOSEPHOSPHATE ISOMERASE"/>
    <property type="match status" value="1"/>
</dbReference>
<dbReference type="Pfam" id="PF00121">
    <property type="entry name" value="TIM"/>
    <property type="match status" value="1"/>
</dbReference>
<dbReference type="SUPFAM" id="SSF51351">
    <property type="entry name" value="Triosephosphate isomerase (TIM)"/>
    <property type="match status" value="1"/>
</dbReference>
<dbReference type="PROSITE" id="PS00171">
    <property type="entry name" value="TIM_1"/>
    <property type="match status" value="1"/>
</dbReference>
<dbReference type="PROSITE" id="PS51440">
    <property type="entry name" value="TIM_2"/>
    <property type="match status" value="1"/>
</dbReference>
<reference key="1">
    <citation type="submission" date="2008-10" db="EMBL/GenBank/DDBJ databases">
        <title>Genome sequence of Bacillus cereus AH820.</title>
        <authorList>
            <person name="Dodson R.J."/>
            <person name="Durkin A.S."/>
            <person name="Rosovitz M.J."/>
            <person name="Rasko D.A."/>
            <person name="Hoffmaster A."/>
            <person name="Ravel J."/>
            <person name="Sutton G."/>
        </authorList>
    </citation>
    <scope>NUCLEOTIDE SEQUENCE [LARGE SCALE GENOMIC DNA]</scope>
    <source>
        <strain>AH820</strain>
    </source>
</reference>
<accession>B7JFG5</accession>
<keyword id="KW-0963">Cytoplasm</keyword>
<keyword id="KW-0312">Gluconeogenesis</keyword>
<keyword id="KW-0324">Glycolysis</keyword>
<keyword id="KW-0413">Isomerase</keyword>
<keyword id="KW-0597">Phosphoprotein</keyword>
<feature type="chain" id="PRO_1000117995" description="Triosephosphate isomerase">
    <location>
        <begin position="1"/>
        <end position="251"/>
    </location>
</feature>
<feature type="active site" description="Electrophile" evidence="1">
    <location>
        <position position="95"/>
    </location>
</feature>
<feature type="active site" description="Proton acceptor" evidence="1">
    <location>
        <position position="167"/>
    </location>
</feature>
<feature type="binding site" evidence="1">
    <location>
        <begin position="9"/>
        <end position="11"/>
    </location>
    <ligand>
        <name>substrate</name>
    </ligand>
</feature>
<feature type="binding site" evidence="1">
    <location>
        <position position="173"/>
    </location>
    <ligand>
        <name>substrate</name>
    </ligand>
</feature>
<feature type="binding site" evidence="1">
    <location>
        <position position="213"/>
    </location>
    <ligand>
        <name>substrate</name>
    </ligand>
</feature>
<feature type="binding site" evidence="1">
    <location>
        <begin position="234"/>
        <end position="235"/>
    </location>
    <ligand>
        <name>substrate</name>
    </ligand>
</feature>
<feature type="modified residue" description="Phosphoserine" evidence="1">
    <location>
        <position position="213"/>
    </location>
</feature>
<name>TPIS_BACC0</name>
<protein>
    <recommendedName>
        <fullName evidence="1">Triosephosphate isomerase</fullName>
        <shortName evidence="1">TIM</shortName>
        <shortName evidence="1">TPI</shortName>
        <ecNumber evidence="1">5.3.1.1</ecNumber>
    </recommendedName>
    <alternativeName>
        <fullName evidence="1">Triose-phosphate isomerase</fullName>
    </alternativeName>
</protein>
<proteinExistence type="inferred from homology"/>
<evidence type="ECO:0000255" key="1">
    <source>
        <dbReference type="HAMAP-Rule" id="MF_00147"/>
    </source>
</evidence>
<comment type="function">
    <text evidence="1">Involved in the gluconeogenesis. Catalyzes stereospecifically the conversion of dihydroxyacetone phosphate (DHAP) to D-glyceraldehyde-3-phosphate (G3P).</text>
</comment>
<comment type="catalytic activity">
    <reaction evidence="1">
        <text>D-glyceraldehyde 3-phosphate = dihydroxyacetone phosphate</text>
        <dbReference type="Rhea" id="RHEA:18585"/>
        <dbReference type="ChEBI" id="CHEBI:57642"/>
        <dbReference type="ChEBI" id="CHEBI:59776"/>
        <dbReference type="EC" id="5.3.1.1"/>
    </reaction>
</comment>
<comment type="pathway">
    <text evidence="1">Carbohydrate biosynthesis; gluconeogenesis.</text>
</comment>
<comment type="pathway">
    <text evidence="1">Carbohydrate degradation; glycolysis; D-glyceraldehyde 3-phosphate from glycerone phosphate: step 1/1.</text>
</comment>
<comment type="subunit">
    <text evidence="1">Homodimer.</text>
</comment>
<comment type="subcellular location">
    <subcellularLocation>
        <location evidence="1">Cytoplasm</location>
    </subcellularLocation>
</comment>
<comment type="similarity">
    <text evidence="1">Belongs to the triosephosphate isomerase family.</text>
</comment>
<sequence>MRKPIIAGNWKMNKTLSEAVSFVEEVKGQIPAASAVDAVVCSPALFLERLVAATEGTDLQVGAQNMHFEKNGAFTGEISPVALSDLKVGYVVLGHSERREMFAETDESVNKKTIAAFEHGLTPIVCCGETLEERESGKTFDLVAGQVTKALAGLTEEQVKATVIAYEPIWAIGTGKSSSSADANEVCAHIRKVVAEAVSPAAAEAVRIQYGGSVKPENIKEYMAQSDIDGALVGGASLEPASFLGLLGAVK</sequence>
<gene>
    <name evidence="1" type="primary">tpiA</name>
    <name type="ordered locus">BCAH820_5222</name>
</gene>